<proteinExistence type="evidence at protein level"/>
<dbReference type="EC" id="2.7.11.1"/>
<dbReference type="EMBL" id="U22321">
    <property type="protein sequence ID" value="AAC52202.1"/>
    <property type="molecule type" value="mRNA"/>
</dbReference>
<dbReference type="PIR" id="C56711">
    <property type="entry name" value="C56711"/>
</dbReference>
<dbReference type="RefSeq" id="NP_074046.1">
    <property type="nucleotide sequence ID" value="NM_022855.3"/>
</dbReference>
<dbReference type="SMR" id="Q62763"/>
<dbReference type="BioGRID" id="249201">
    <property type="interactions" value="1"/>
</dbReference>
<dbReference type="FunCoup" id="Q62763">
    <property type="interactions" value="3116"/>
</dbReference>
<dbReference type="STRING" id="10116.ENSRNOP00000022792"/>
<dbReference type="PhosphoSitePlus" id="Q62763"/>
<dbReference type="SwissPalm" id="Q62763"/>
<dbReference type="jPOST" id="Q62763"/>
<dbReference type="PaxDb" id="10116-ENSRNOP00000022792"/>
<dbReference type="Ensembl" id="ENSRNOT00000103210.1">
    <property type="protein sequence ID" value="ENSRNOP00000093418.1"/>
    <property type="gene ID" value="ENSRNOG00000016677.7"/>
</dbReference>
<dbReference type="GeneID" id="64823"/>
<dbReference type="KEGG" id="rno:64823"/>
<dbReference type="UCSC" id="RGD:621408">
    <property type="organism name" value="rat"/>
</dbReference>
<dbReference type="AGR" id="RGD:621408"/>
<dbReference type="CTD" id="1456"/>
<dbReference type="RGD" id="621408">
    <property type="gene designation" value="Csnk1g3"/>
</dbReference>
<dbReference type="eggNOG" id="KOG1165">
    <property type="taxonomic scope" value="Eukaryota"/>
</dbReference>
<dbReference type="GeneTree" id="ENSGT00940000160646"/>
<dbReference type="InParanoid" id="Q62763"/>
<dbReference type="OrthoDB" id="5800476at2759"/>
<dbReference type="PhylomeDB" id="Q62763"/>
<dbReference type="TreeFam" id="TF313349"/>
<dbReference type="BRENDA" id="2.7.11.1">
    <property type="organism ID" value="5301"/>
</dbReference>
<dbReference type="PRO" id="PR:Q62763"/>
<dbReference type="Proteomes" id="UP000002494">
    <property type="component" value="Chromosome 18"/>
</dbReference>
<dbReference type="GO" id="GO:0005737">
    <property type="term" value="C:cytoplasm"/>
    <property type="evidence" value="ECO:0000318"/>
    <property type="project" value="GO_Central"/>
</dbReference>
<dbReference type="GO" id="GO:0005634">
    <property type="term" value="C:nucleus"/>
    <property type="evidence" value="ECO:0000318"/>
    <property type="project" value="GO_Central"/>
</dbReference>
<dbReference type="GO" id="GO:0005886">
    <property type="term" value="C:plasma membrane"/>
    <property type="evidence" value="ECO:0000318"/>
    <property type="project" value="GO_Central"/>
</dbReference>
<dbReference type="GO" id="GO:0005524">
    <property type="term" value="F:ATP binding"/>
    <property type="evidence" value="ECO:0007669"/>
    <property type="project" value="UniProtKB-KW"/>
</dbReference>
<dbReference type="GO" id="GO:0106310">
    <property type="term" value="F:protein serine kinase activity"/>
    <property type="evidence" value="ECO:0007669"/>
    <property type="project" value="RHEA"/>
</dbReference>
<dbReference type="GO" id="GO:0004674">
    <property type="term" value="F:protein serine/threonine kinase activity"/>
    <property type="evidence" value="ECO:0000314"/>
    <property type="project" value="RGD"/>
</dbReference>
<dbReference type="GO" id="GO:0006897">
    <property type="term" value="P:endocytosis"/>
    <property type="evidence" value="ECO:0000318"/>
    <property type="project" value="GO_Central"/>
</dbReference>
<dbReference type="GO" id="GO:0090263">
    <property type="term" value="P:positive regulation of canonical Wnt signaling pathway"/>
    <property type="evidence" value="ECO:0000318"/>
    <property type="project" value="GO_Central"/>
</dbReference>
<dbReference type="GO" id="GO:0007165">
    <property type="term" value="P:signal transduction"/>
    <property type="evidence" value="ECO:0000318"/>
    <property type="project" value="GO_Central"/>
</dbReference>
<dbReference type="GO" id="GO:0016055">
    <property type="term" value="P:Wnt signaling pathway"/>
    <property type="evidence" value="ECO:0007669"/>
    <property type="project" value="UniProtKB-KW"/>
</dbReference>
<dbReference type="CDD" id="cd14126">
    <property type="entry name" value="STKc_CK1_gamma"/>
    <property type="match status" value="1"/>
</dbReference>
<dbReference type="FunFam" id="1.10.510.10:FF:001113">
    <property type="entry name" value="Casein kinase 1 gamma 2"/>
    <property type="match status" value="1"/>
</dbReference>
<dbReference type="FunFam" id="3.30.200.20:FF:000018">
    <property type="entry name" value="Casein kinase I isoform gamma-1"/>
    <property type="match status" value="1"/>
</dbReference>
<dbReference type="Gene3D" id="3.30.200.20">
    <property type="entry name" value="Phosphorylase Kinase, domain 1"/>
    <property type="match status" value="1"/>
</dbReference>
<dbReference type="Gene3D" id="1.10.510.10">
    <property type="entry name" value="Transferase(Phosphotransferase) domain 1"/>
    <property type="match status" value="1"/>
</dbReference>
<dbReference type="InterPro" id="IPR022247">
    <property type="entry name" value="Casein_kinase-1_gamma_C"/>
</dbReference>
<dbReference type="InterPro" id="IPR050235">
    <property type="entry name" value="CK1_Ser-Thr_kinase"/>
</dbReference>
<dbReference type="InterPro" id="IPR011009">
    <property type="entry name" value="Kinase-like_dom_sf"/>
</dbReference>
<dbReference type="InterPro" id="IPR000719">
    <property type="entry name" value="Prot_kinase_dom"/>
</dbReference>
<dbReference type="InterPro" id="IPR017441">
    <property type="entry name" value="Protein_kinase_ATP_BS"/>
</dbReference>
<dbReference type="InterPro" id="IPR008271">
    <property type="entry name" value="Ser/Thr_kinase_AS"/>
</dbReference>
<dbReference type="PANTHER" id="PTHR11909">
    <property type="entry name" value="CASEIN KINASE-RELATED"/>
    <property type="match status" value="1"/>
</dbReference>
<dbReference type="Pfam" id="PF12605">
    <property type="entry name" value="CK1gamma_C"/>
    <property type="match status" value="1"/>
</dbReference>
<dbReference type="Pfam" id="PF00069">
    <property type="entry name" value="Pkinase"/>
    <property type="match status" value="1"/>
</dbReference>
<dbReference type="SMART" id="SM00220">
    <property type="entry name" value="S_TKc"/>
    <property type="match status" value="1"/>
</dbReference>
<dbReference type="SUPFAM" id="SSF56112">
    <property type="entry name" value="Protein kinase-like (PK-like)"/>
    <property type="match status" value="1"/>
</dbReference>
<dbReference type="PROSITE" id="PS00107">
    <property type="entry name" value="PROTEIN_KINASE_ATP"/>
    <property type="match status" value="1"/>
</dbReference>
<dbReference type="PROSITE" id="PS50011">
    <property type="entry name" value="PROTEIN_KINASE_DOM"/>
    <property type="match status" value="1"/>
</dbReference>
<dbReference type="PROSITE" id="PS00108">
    <property type="entry name" value="PROTEIN_KINASE_ST"/>
    <property type="match status" value="1"/>
</dbReference>
<sequence length="448" mass="51429">MDNKKKDKDKSDDRMARPSGRSGHSTRGTGSSSSGVLMVGPNFRVGKKIGCGNFGELRLGKNLYTNEYVAIKLEPMKSRAPQLHLEYRFYKQLGSGDGIPQVYYFGPCGKYNAMVLELLGPSLEDLFDLCDRTFSLKTVLMIAIQLISRMEYVHSKNLIYRDVKPENFLIGRPGNKAQQVIHIIDFGLAKEYIDPETKKHIPYREHKSLTGTARYMSINTHLGKEQSRRDDLEALGHMFMYFLRGSLPWQGLKADTLKERYQKIGDTKRATPIEVLCENFPEEMATYLRYVRRLDFFEKPDYDYLRKLFTDLFDRKGYMFDYEYDWIGKQLPTPVGAVQQDPALSSNREAHQHRDKIQQSKNQSADHRAAWDSQQANPHHLRAHLAADRHGGSVQVVSSTNGELNTDDPTAGRSNAPITAPTEVEVMDETKCCCFFKRRKRKTIQRHK</sequence>
<name>KC1G3_RAT</name>
<comment type="function">
    <text evidence="1">Serine/threonine-protein kinase. Casein kinases are operationally defined by their preferential utilization of acidic proteins such as caseins as substrates. It can phosphorylate a large number of proteins. Participates in Wnt signaling. Regulates fast synaptic transmission mediated by glutamate (By similarity).</text>
</comment>
<comment type="catalytic activity">
    <reaction>
        <text>L-seryl-[protein] + ATP = O-phospho-L-seryl-[protein] + ADP + H(+)</text>
        <dbReference type="Rhea" id="RHEA:17989"/>
        <dbReference type="Rhea" id="RHEA-COMP:9863"/>
        <dbReference type="Rhea" id="RHEA-COMP:11604"/>
        <dbReference type="ChEBI" id="CHEBI:15378"/>
        <dbReference type="ChEBI" id="CHEBI:29999"/>
        <dbReference type="ChEBI" id="CHEBI:30616"/>
        <dbReference type="ChEBI" id="CHEBI:83421"/>
        <dbReference type="ChEBI" id="CHEBI:456216"/>
        <dbReference type="EC" id="2.7.11.1"/>
    </reaction>
</comment>
<comment type="catalytic activity">
    <reaction>
        <text>L-threonyl-[protein] + ATP = O-phospho-L-threonyl-[protein] + ADP + H(+)</text>
        <dbReference type="Rhea" id="RHEA:46608"/>
        <dbReference type="Rhea" id="RHEA-COMP:11060"/>
        <dbReference type="Rhea" id="RHEA-COMP:11605"/>
        <dbReference type="ChEBI" id="CHEBI:15378"/>
        <dbReference type="ChEBI" id="CHEBI:30013"/>
        <dbReference type="ChEBI" id="CHEBI:30616"/>
        <dbReference type="ChEBI" id="CHEBI:61977"/>
        <dbReference type="ChEBI" id="CHEBI:456216"/>
        <dbReference type="EC" id="2.7.11.1"/>
    </reaction>
</comment>
<comment type="subunit">
    <text evidence="1">Monomer.</text>
</comment>
<comment type="subcellular location">
    <subcellularLocation>
        <location>Cytoplasm</location>
    </subcellularLocation>
</comment>
<comment type="tissue specificity">
    <text>Expressed in testis, brain, heart, kidney, lung, liver and muscle.</text>
</comment>
<comment type="PTM">
    <text>Autophosphorylated.</text>
</comment>
<comment type="miscellaneous">
    <text>Triazolodiamine 1 is a commercial name for 5-amino-3-([4-(aminosulfonyl)phenyl]amino)-N-(2,6-difluorophenyl)-1H-1,2,4-triazole-1-carbothioamide.</text>
</comment>
<comment type="similarity">
    <text evidence="6">Belongs to the protein kinase superfamily. CK1 Ser/Thr protein kinase family. Casein kinase I subfamily.</text>
</comment>
<protein>
    <recommendedName>
        <fullName>Casein kinase I isoform gamma-3</fullName>
        <shortName>CKI-gamma 3</shortName>
        <ecNumber>2.7.11.1</ecNumber>
    </recommendedName>
</protein>
<organism>
    <name type="scientific">Rattus norvegicus</name>
    <name type="common">Rat</name>
    <dbReference type="NCBI Taxonomy" id="10116"/>
    <lineage>
        <taxon>Eukaryota</taxon>
        <taxon>Metazoa</taxon>
        <taxon>Chordata</taxon>
        <taxon>Craniata</taxon>
        <taxon>Vertebrata</taxon>
        <taxon>Euteleostomi</taxon>
        <taxon>Mammalia</taxon>
        <taxon>Eutheria</taxon>
        <taxon>Euarchontoglires</taxon>
        <taxon>Glires</taxon>
        <taxon>Rodentia</taxon>
        <taxon>Myomorpha</taxon>
        <taxon>Muroidea</taxon>
        <taxon>Muridae</taxon>
        <taxon>Murinae</taxon>
        <taxon>Rattus</taxon>
    </lineage>
</organism>
<reference key="1">
    <citation type="journal article" date="1995" name="J. Biol. Chem.">
        <title>Casein kinase I gamma subfamily. Molecular cloning, expression, and characterization of three mammalian isoforms and complementation of defects in the Saccharomyces cerevisiae YCK genes.</title>
        <authorList>
            <person name="Zhai L."/>
            <person name="Graves P.R."/>
            <person name="Robinson L.C."/>
            <person name="Italiano M."/>
            <person name="Culbertson M.R."/>
            <person name="Rowles J."/>
            <person name="Cobb M.H."/>
            <person name="Depaoli-Roach A.A."/>
            <person name="Roach P.J."/>
        </authorList>
    </citation>
    <scope>NUCLEOTIDE SEQUENCE [MRNA]</scope>
    <source>
        <tissue>Testis</tissue>
    </source>
</reference>
<reference key="2">
    <citation type="journal article" date="2012" name="Nat. Commun.">
        <title>Quantitative maps of protein phosphorylation sites across 14 different rat organs and tissues.</title>
        <authorList>
            <person name="Lundby A."/>
            <person name="Secher A."/>
            <person name="Lage K."/>
            <person name="Nordsborg N.B."/>
            <person name="Dmytriyev A."/>
            <person name="Lundby C."/>
            <person name="Olsen J.V."/>
        </authorList>
    </citation>
    <scope>IDENTIFICATION BY MASS SPECTROMETRY [LARGE SCALE ANALYSIS]</scope>
</reference>
<evidence type="ECO:0000250" key="1"/>
<evidence type="ECO:0000250" key="2">
    <source>
        <dbReference type="UniProtKB" id="Q9Y6M4"/>
    </source>
</evidence>
<evidence type="ECO:0000255" key="3">
    <source>
        <dbReference type="PROSITE-ProRule" id="PRU00159"/>
    </source>
</evidence>
<evidence type="ECO:0000255" key="4">
    <source>
        <dbReference type="PROSITE-ProRule" id="PRU10027"/>
    </source>
</evidence>
<evidence type="ECO:0000256" key="5">
    <source>
        <dbReference type="SAM" id="MobiDB-lite"/>
    </source>
</evidence>
<evidence type="ECO:0000305" key="6"/>
<feature type="chain" id="PRO_0000192847" description="Casein kinase I isoform gamma-3">
    <location>
        <begin position="1"/>
        <end position="448"/>
    </location>
</feature>
<feature type="domain" description="Protein kinase" evidence="3">
    <location>
        <begin position="43"/>
        <end position="313"/>
    </location>
</feature>
<feature type="region of interest" description="Disordered" evidence="5">
    <location>
        <begin position="1"/>
        <end position="35"/>
    </location>
</feature>
<feature type="region of interest" description="Disordered" evidence="5">
    <location>
        <begin position="342"/>
        <end position="375"/>
    </location>
</feature>
<feature type="region of interest" description="Disordered" evidence="5">
    <location>
        <begin position="392"/>
        <end position="417"/>
    </location>
</feature>
<feature type="compositionally biased region" description="Basic and acidic residues" evidence="5">
    <location>
        <begin position="1"/>
        <end position="16"/>
    </location>
</feature>
<feature type="compositionally biased region" description="Low complexity" evidence="5">
    <location>
        <begin position="19"/>
        <end position="35"/>
    </location>
</feature>
<feature type="compositionally biased region" description="Basic and acidic residues" evidence="5">
    <location>
        <begin position="348"/>
        <end position="370"/>
    </location>
</feature>
<feature type="compositionally biased region" description="Polar residues" evidence="5">
    <location>
        <begin position="395"/>
        <end position="417"/>
    </location>
</feature>
<feature type="active site" description="Proton acceptor" evidence="3 4">
    <location>
        <position position="162"/>
    </location>
</feature>
<feature type="binding site" evidence="3">
    <location>
        <begin position="49"/>
        <end position="57"/>
    </location>
    <ligand>
        <name>ATP</name>
        <dbReference type="ChEBI" id="CHEBI:30616"/>
    </ligand>
</feature>
<feature type="binding site" evidence="3">
    <location>
        <position position="72"/>
    </location>
    <ligand>
        <name>ATP</name>
        <dbReference type="ChEBI" id="CHEBI:30616"/>
    </ligand>
</feature>
<feature type="modified residue" description="N-acetylmethionine" evidence="2">
    <location>
        <position position="1"/>
    </location>
</feature>
<feature type="modified residue" description="Phosphoserine" evidence="2">
    <location>
        <position position="414"/>
    </location>
</feature>
<keyword id="KW-0007">Acetylation</keyword>
<keyword id="KW-0067">ATP-binding</keyword>
<keyword id="KW-0963">Cytoplasm</keyword>
<keyword id="KW-0418">Kinase</keyword>
<keyword id="KW-0547">Nucleotide-binding</keyword>
<keyword id="KW-0597">Phosphoprotein</keyword>
<keyword id="KW-1185">Reference proteome</keyword>
<keyword id="KW-0723">Serine/threonine-protein kinase</keyword>
<keyword id="KW-0808">Transferase</keyword>
<keyword id="KW-0879">Wnt signaling pathway</keyword>
<gene>
    <name type="primary">Csnk1g3</name>
</gene>
<accession>Q62763</accession>